<dbReference type="EMBL" id="U00007">
    <property type="protein sequence ID" value="AAA60476.1"/>
    <property type="molecule type" value="Genomic_DNA"/>
</dbReference>
<dbReference type="EMBL" id="U00096">
    <property type="protein sequence ID" value="AAC75173.1"/>
    <property type="molecule type" value="Genomic_DNA"/>
</dbReference>
<dbReference type="EMBL" id="AP009048">
    <property type="protein sequence ID" value="BAE76590.1"/>
    <property type="molecule type" value="Genomic_DNA"/>
</dbReference>
<dbReference type="PIR" id="G64978">
    <property type="entry name" value="G64978"/>
</dbReference>
<dbReference type="RefSeq" id="NP_416615.1">
    <property type="nucleotide sequence ID" value="NC_000913.3"/>
</dbReference>
<dbReference type="RefSeq" id="WP_001324851.1">
    <property type="nucleotide sequence ID" value="NZ_SSZK01000011.1"/>
</dbReference>
<dbReference type="BioGRID" id="4259507">
    <property type="interactions" value="170"/>
</dbReference>
<dbReference type="FunCoup" id="P33344">
    <property type="interactions" value="8"/>
</dbReference>
<dbReference type="STRING" id="511145.b2112"/>
<dbReference type="PaxDb" id="511145-b2112"/>
<dbReference type="EnsemblBacteria" id="AAC75173">
    <property type="protein sequence ID" value="AAC75173"/>
    <property type="gene ID" value="b2112"/>
</dbReference>
<dbReference type="GeneID" id="946615"/>
<dbReference type="KEGG" id="ecj:JW2099"/>
<dbReference type="KEGG" id="eco:b2112"/>
<dbReference type="KEGG" id="ecoc:C3026_11850"/>
<dbReference type="PATRIC" id="fig|511145.12.peg.2189"/>
<dbReference type="EchoBASE" id="EB1934"/>
<dbReference type="eggNOG" id="ENOG50331KG">
    <property type="taxonomic scope" value="Bacteria"/>
</dbReference>
<dbReference type="HOGENOM" id="CLU_164781_0_0_6"/>
<dbReference type="InParanoid" id="P33344"/>
<dbReference type="OMA" id="KQPQQRC"/>
<dbReference type="OrthoDB" id="6571991at2"/>
<dbReference type="PhylomeDB" id="P33344"/>
<dbReference type="BioCyc" id="EcoCyc:EG11991-MONOMER"/>
<dbReference type="PRO" id="PR:P33344"/>
<dbReference type="Proteomes" id="UP000000625">
    <property type="component" value="Chromosome"/>
</dbReference>
<dbReference type="InterPro" id="IPR020386">
    <property type="entry name" value="Uncharacterised_YehE"/>
</dbReference>
<dbReference type="Pfam" id="PF10836">
    <property type="entry name" value="DUF2574"/>
    <property type="match status" value="1"/>
</dbReference>
<name>YEHE_ECOLI</name>
<keyword id="KW-1185">Reference proteome</keyword>
<keyword id="KW-0732">Signal</keyword>
<proteinExistence type="inferred from homology"/>
<gene>
    <name type="primary">yehE</name>
    <name type="ordered locus">b2112</name>
    <name type="ordered locus">JW2099</name>
</gene>
<organism>
    <name type="scientific">Escherichia coli (strain K12)</name>
    <dbReference type="NCBI Taxonomy" id="83333"/>
    <lineage>
        <taxon>Bacteria</taxon>
        <taxon>Pseudomonadati</taxon>
        <taxon>Pseudomonadota</taxon>
        <taxon>Gammaproteobacteria</taxon>
        <taxon>Enterobacterales</taxon>
        <taxon>Enterobacteriaceae</taxon>
        <taxon>Escherichia</taxon>
    </lineage>
</organism>
<feature type="signal peptide" evidence="1">
    <location>
        <begin position="1"/>
        <end position="22"/>
    </location>
</feature>
<feature type="chain" id="PRO_0000013869" description="Uncharacterized protein YehE">
    <location>
        <begin position="23"/>
        <end position="93"/>
    </location>
</feature>
<accession>P33344</accession>
<accession>Q2MAW6</accession>
<sequence>MNKYWLSGIIFLAYGLASPAFSSETATLAINGRISPPTCSMAMVNGQPQQHCGQLTYNVDTRHLFSSPVKGVTTEVVVAGSDSKRRIVLNRYD</sequence>
<reference key="1">
    <citation type="submission" date="1993-10" db="EMBL/GenBank/DDBJ databases">
        <title>Automated multiplex sequencing of the E.coli genome.</title>
        <authorList>
            <person name="Richterich P."/>
            <person name="Lakey N."/>
            <person name="Gryan G."/>
            <person name="Jaehn L."/>
            <person name="Mintz L."/>
            <person name="Robison K."/>
            <person name="Church G.M."/>
        </authorList>
    </citation>
    <scope>NUCLEOTIDE SEQUENCE [LARGE SCALE GENOMIC DNA]</scope>
    <source>
        <strain>K12 / BHB2600</strain>
    </source>
</reference>
<reference key="2">
    <citation type="journal article" date="1997" name="Science">
        <title>The complete genome sequence of Escherichia coli K-12.</title>
        <authorList>
            <person name="Blattner F.R."/>
            <person name="Plunkett G. III"/>
            <person name="Bloch C.A."/>
            <person name="Perna N.T."/>
            <person name="Burland V."/>
            <person name="Riley M."/>
            <person name="Collado-Vides J."/>
            <person name="Glasner J.D."/>
            <person name="Rode C.K."/>
            <person name="Mayhew G.F."/>
            <person name="Gregor J."/>
            <person name="Davis N.W."/>
            <person name="Kirkpatrick H.A."/>
            <person name="Goeden M.A."/>
            <person name="Rose D.J."/>
            <person name="Mau B."/>
            <person name="Shao Y."/>
        </authorList>
    </citation>
    <scope>NUCLEOTIDE SEQUENCE [LARGE SCALE GENOMIC DNA]</scope>
    <source>
        <strain>K12 / MG1655 / ATCC 47076</strain>
    </source>
</reference>
<reference key="3">
    <citation type="journal article" date="2006" name="Mol. Syst. Biol.">
        <title>Highly accurate genome sequences of Escherichia coli K-12 strains MG1655 and W3110.</title>
        <authorList>
            <person name="Hayashi K."/>
            <person name="Morooka N."/>
            <person name="Yamamoto Y."/>
            <person name="Fujita K."/>
            <person name="Isono K."/>
            <person name="Choi S."/>
            <person name="Ohtsubo E."/>
            <person name="Baba T."/>
            <person name="Wanner B.L."/>
            <person name="Mori H."/>
            <person name="Horiuchi T."/>
        </authorList>
    </citation>
    <scope>NUCLEOTIDE SEQUENCE [LARGE SCALE GENOMIC DNA]</scope>
    <source>
        <strain>K12 / W3110 / ATCC 27325 / DSM 5911</strain>
    </source>
</reference>
<evidence type="ECO:0000255" key="1"/>
<protein>
    <recommendedName>
        <fullName>Uncharacterized protein YehE</fullName>
    </recommendedName>
</protein>